<protein>
    <recommendedName>
        <fullName evidence="1">Periplasmic nitrate reductase</fullName>
        <ecNumber evidence="1">1.9.6.1</ecNumber>
    </recommendedName>
</protein>
<name>NAPA_STUST</name>
<dbReference type="EC" id="1.9.6.1" evidence="1"/>
<dbReference type="EMBL" id="DQ200356">
    <property type="protein sequence ID" value="ABA42173.1"/>
    <property type="molecule type" value="Genomic_DNA"/>
</dbReference>
<dbReference type="RefSeq" id="WP_011912447.1">
    <property type="nucleotide sequence ID" value="NZ_CP098731.1"/>
</dbReference>
<dbReference type="SMR" id="Q3HS05"/>
<dbReference type="GO" id="GO:0016020">
    <property type="term" value="C:membrane"/>
    <property type="evidence" value="ECO:0007669"/>
    <property type="project" value="TreeGrafter"/>
</dbReference>
<dbReference type="GO" id="GO:0009325">
    <property type="term" value="C:nitrate reductase complex"/>
    <property type="evidence" value="ECO:0007669"/>
    <property type="project" value="TreeGrafter"/>
</dbReference>
<dbReference type="GO" id="GO:0042597">
    <property type="term" value="C:periplasmic space"/>
    <property type="evidence" value="ECO:0007669"/>
    <property type="project" value="UniProtKB-SubCell"/>
</dbReference>
<dbReference type="GO" id="GO:0051539">
    <property type="term" value="F:4 iron, 4 sulfur cluster binding"/>
    <property type="evidence" value="ECO:0007669"/>
    <property type="project" value="UniProtKB-KW"/>
</dbReference>
<dbReference type="GO" id="GO:0009055">
    <property type="term" value="F:electron transfer activity"/>
    <property type="evidence" value="ECO:0007669"/>
    <property type="project" value="UniProtKB-UniRule"/>
</dbReference>
<dbReference type="GO" id="GO:0005506">
    <property type="term" value="F:iron ion binding"/>
    <property type="evidence" value="ECO:0007669"/>
    <property type="project" value="UniProtKB-UniRule"/>
</dbReference>
<dbReference type="GO" id="GO:0030151">
    <property type="term" value="F:molybdenum ion binding"/>
    <property type="evidence" value="ECO:0007669"/>
    <property type="project" value="InterPro"/>
</dbReference>
<dbReference type="GO" id="GO:0043546">
    <property type="term" value="F:molybdopterin cofactor binding"/>
    <property type="evidence" value="ECO:0007669"/>
    <property type="project" value="InterPro"/>
</dbReference>
<dbReference type="GO" id="GO:0050140">
    <property type="term" value="F:nitrate reductase (cytochrome) activity"/>
    <property type="evidence" value="ECO:0007669"/>
    <property type="project" value="UniProtKB-EC"/>
</dbReference>
<dbReference type="GO" id="GO:0045333">
    <property type="term" value="P:cellular respiration"/>
    <property type="evidence" value="ECO:0007669"/>
    <property type="project" value="UniProtKB-ARBA"/>
</dbReference>
<dbReference type="GO" id="GO:0006777">
    <property type="term" value="P:Mo-molybdopterin cofactor biosynthetic process"/>
    <property type="evidence" value="ECO:0007669"/>
    <property type="project" value="UniProtKB-UniRule"/>
</dbReference>
<dbReference type="GO" id="GO:0042128">
    <property type="term" value="P:nitrate assimilation"/>
    <property type="evidence" value="ECO:0007669"/>
    <property type="project" value="UniProtKB-UniRule"/>
</dbReference>
<dbReference type="CDD" id="cd02791">
    <property type="entry name" value="MopB_CT_Nitrate-R-NapA-like"/>
    <property type="match status" value="1"/>
</dbReference>
<dbReference type="CDD" id="cd02754">
    <property type="entry name" value="MopB_Nitrate-R-NapA-like"/>
    <property type="match status" value="1"/>
</dbReference>
<dbReference type="FunFam" id="2.40.40.20:FF:000005">
    <property type="entry name" value="Periplasmic nitrate reductase"/>
    <property type="match status" value="1"/>
</dbReference>
<dbReference type="Gene3D" id="2.40.40.20">
    <property type="match status" value="1"/>
</dbReference>
<dbReference type="Gene3D" id="3.30.200.210">
    <property type="match status" value="1"/>
</dbReference>
<dbReference type="Gene3D" id="3.40.50.740">
    <property type="match status" value="1"/>
</dbReference>
<dbReference type="Gene3D" id="3.40.228.10">
    <property type="entry name" value="Dimethylsulfoxide Reductase, domain 2"/>
    <property type="match status" value="1"/>
</dbReference>
<dbReference type="HAMAP" id="MF_01630">
    <property type="entry name" value="Nitrate_reduct_NapA"/>
    <property type="match status" value="1"/>
</dbReference>
<dbReference type="InterPro" id="IPR009010">
    <property type="entry name" value="Asp_de-COase-like_dom_sf"/>
</dbReference>
<dbReference type="InterPro" id="IPR041957">
    <property type="entry name" value="CT_Nitrate-R-NapA-like"/>
</dbReference>
<dbReference type="InterPro" id="IPR006657">
    <property type="entry name" value="MoPterin_dinucl-bd_dom"/>
</dbReference>
<dbReference type="InterPro" id="IPR006656">
    <property type="entry name" value="Mopterin_OxRdtase"/>
</dbReference>
<dbReference type="InterPro" id="IPR006963">
    <property type="entry name" value="Mopterin_OxRdtase_4Fe-4S_dom"/>
</dbReference>
<dbReference type="InterPro" id="IPR027467">
    <property type="entry name" value="MopterinOxRdtase_cofactor_BS"/>
</dbReference>
<dbReference type="InterPro" id="IPR010051">
    <property type="entry name" value="Periplasm_NO3_reductase_lsu"/>
</dbReference>
<dbReference type="InterPro" id="IPR050123">
    <property type="entry name" value="Prok_molybdopt-oxidoreductase"/>
</dbReference>
<dbReference type="InterPro" id="IPR006311">
    <property type="entry name" value="TAT_signal"/>
</dbReference>
<dbReference type="NCBIfam" id="TIGR01706">
    <property type="entry name" value="NAPA"/>
    <property type="match status" value="1"/>
</dbReference>
<dbReference type="NCBIfam" id="NF010055">
    <property type="entry name" value="PRK13532.1"/>
    <property type="match status" value="1"/>
</dbReference>
<dbReference type="PANTHER" id="PTHR43105:SF11">
    <property type="entry name" value="PERIPLASMIC NITRATE REDUCTASE"/>
    <property type="match status" value="1"/>
</dbReference>
<dbReference type="PANTHER" id="PTHR43105">
    <property type="entry name" value="RESPIRATORY NITRATE REDUCTASE"/>
    <property type="match status" value="1"/>
</dbReference>
<dbReference type="Pfam" id="PF04879">
    <property type="entry name" value="Molybdop_Fe4S4"/>
    <property type="match status" value="1"/>
</dbReference>
<dbReference type="Pfam" id="PF00384">
    <property type="entry name" value="Molybdopterin"/>
    <property type="match status" value="1"/>
</dbReference>
<dbReference type="Pfam" id="PF01568">
    <property type="entry name" value="Molydop_binding"/>
    <property type="match status" value="1"/>
</dbReference>
<dbReference type="SMART" id="SM00926">
    <property type="entry name" value="Molybdop_Fe4S4"/>
    <property type="match status" value="1"/>
</dbReference>
<dbReference type="SUPFAM" id="SSF50692">
    <property type="entry name" value="ADC-like"/>
    <property type="match status" value="1"/>
</dbReference>
<dbReference type="SUPFAM" id="SSF53706">
    <property type="entry name" value="Formate dehydrogenase/DMSO reductase, domains 1-3"/>
    <property type="match status" value="1"/>
</dbReference>
<dbReference type="PROSITE" id="PS51669">
    <property type="entry name" value="4FE4S_MOW_BIS_MGD"/>
    <property type="match status" value="1"/>
</dbReference>
<dbReference type="PROSITE" id="PS00551">
    <property type="entry name" value="MOLYBDOPTERIN_PROK_1"/>
    <property type="match status" value="1"/>
</dbReference>
<dbReference type="PROSITE" id="PS51318">
    <property type="entry name" value="TAT"/>
    <property type="match status" value="1"/>
</dbReference>
<gene>
    <name evidence="1" type="primary">napA</name>
</gene>
<accession>Q3HS05</accession>
<sequence>MSLTRRQFAKANAAAIAATVAGMPIASTASNLVTEADATNLKWDKAPCRFCGTGCGVMVATRENRVVATHGDVKADVNRGINCVKGYFLSKIMYGTDRLTQPLLRMKDGKFDKQGEFQPVTWDQAFDIMEEKYKAALKAGGPEAIGMFGSGQWTIWEGYAANKLMKAGFRSNNIDPNARHCMASAAFGFMRTFGMDEPMGCYEDIEAADAFVLWGSNMAEMHPVLWTRLTDRRLSAPHVKVAVMSTFEHRSFELADIPMIFNPQTDLVILNYIANHIIQSGAVNKEFIDKHTRFAKGATNIGYGLRPTDPLELKAENAAVANTWTDIGYEDYVEFLKPYTLEHAAKESGVPAERLKALAELYADPKVKVMSFWTMGFNQHTRGVWANNMIYNIHLLTGKISEPGNSPFSLTGQPSACGTAREVGTFSHRLPADMAVTNPKHRAITEKIWKLPEGTIQEKPGFHAVDQSRKLKDGVLKVYWTQVTNNMQAGPNVMQEILPGWRNPETFVIVSDVYPTVSAQAADLILPSAMWVEKEGAYGNAERRTQFWHQLVTAPGEARSDLWQLVEFSKRFRVDEVWPAELLSKAPEFKDKTLFDVLFKNGQVDRFSNDEIAEGYANYEAEAFGFYLQKGLFEEYAEFGRGHAHDLAAFDVYHRERGLRWPVVDEKETQWRYREGYDPYVEAGSGVQFYGNADKKAIIFALPYEVPAEVPDEEYPFWLSTGRVLEHWHTGSMTQRVDELHKAVPDALVYMHPEDARKLNVRRGSVVKIVSRRGEMQGRVETRGRNKPPMGLVYVPFFDANKLINKVTLDATDPISKQTDFKKCAVKIEVVSIA</sequence>
<reference key="1">
    <citation type="submission" date="2005-09" db="EMBL/GenBank/DDBJ databases">
        <title>Nitrate reduction in Pseudomonas stutzeri A15 and its contribution to rice and wheat rhizosphere fitness.</title>
        <authorList>
            <person name="Rediers H."/>
            <person name="Vanderleyden J."/>
            <person name="De Mot R."/>
        </authorList>
    </citation>
    <scope>NUCLEOTIDE SEQUENCE [GENOMIC DNA]</scope>
    <source>
        <strain>A15</strain>
    </source>
</reference>
<comment type="function">
    <text evidence="1">Catalytic subunit of the periplasmic nitrate reductase complex NapAB. Receives electrons from NapB and catalyzes the reduction of nitrate to nitrite.</text>
</comment>
<comment type="catalytic activity">
    <reaction evidence="1">
        <text>2 Fe(II)-[cytochrome] + nitrate + 2 H(+) = 2 Fe(III)-[cytochrome] + nitrite + H2O</text>
        <dbReference type="Rhea" id="RHEA:12909"/>
        <dbReference type="Rhea" id="RHEA-COMP:11777"/>
        <dbReference type="Rhea" id="RHEA-COMP:11778"/>
        <dbReference type="ChEBI" id="CHEBI:15377"/>
        <dbReference type="ChEBI" id="CHEBI:15378"/>
        <dbReference type="ChEBI" id="CHEBI:16301"/>
        <dbReference type="ChEBI" id="CHEBI:17632"/>
        <dbReference type="ChEBI" id="CHEBI:29033"/>
        <dbReference type="ChEBI" id="CHEBI:29034"/>
        <dbReference type="EC" id="1.9.6.1"/>
    </reaction>
</comment>
<comment type="cofactor">
    <cofactor evidence="1">
        <name>[4Fe-4S] cluster</name>
        <dbReference type="ChEBI" id="CHEBI:49883"/>
    </cofactor>
    <text evidence="1">Binds 1 [4Fe-4S] cluster.</text>
</comment>
<comment type="cofactor">
    <cofactor evidence="1">
        <name>Mo-bis(molybdopterin guanine dinucleotide)</name>
        <dbReference type="ChEBI" id="CHEBI:60539"/>
    </cofactor>
    <text evidence="1">Binds 1 molybdenum-bis(molybdopterin guanine dinucleotide) (Mo-bis-MGD) cofactor per subunit.</text>
</comment>
<comment type="subunit">
    <text evidence="1">Component of the periplasmic nitrate reductase NapAB complex composed of NapA and NapB.</text>
</comment>
<comment type="subcellular location">
    <subcellularLocation>
        <location evidence="1">Periplasm</location>
    </subcellularLocation>
</comment>
<comment type="PTM">
    <text evidence="1">Predicted to be exported by the Tat system. The position of the signal peptide cleavage has not been experimentally proven.</text>
</comment>
<comment type="similarity">
    <text evidence="1">Belongs to the prokaryotic molybdopterin-containing oxidoreductase family. NasA/NapA/NarB subfamily.</text>
</comment>
<proteinExistence type="inferred from homology"/>
<feature type="signal peptide" description="Tat-type signal" evidence="1">
    <location>
        <begin position="1"/>
        <end position="29"/>
    </location>
</feature>
<feature type="chain" id="PRO_0000045996" description="Periplasmic nitrate reductase" evidence="1">
    <location>
        <begin position="30"/>
        <end position="834"/>
    </location>
</feature>
<feature type="domain" description="4Fe-4S Mo/W bis-MGD-type" evidence="1">
    <location>
        <begin position="41"/>
        <end position="97"/>
    </location>
</feature>
<feature type="binding site" evidence="1">
    <location>
        <position position="48"/>
    </location>
    <ligand>
        <name>[4Fe-4S] cluster</name>
        <dbReference type="ChEBI" id="CHEBI:49883"/>
    </ligand>
</feature>
<feature type="binding site" evidence="1">
    <location>
        <position position="51"/>
    </location>
    <ligand>
        <name>[4Fe-4S] cluster</name>
        <dbReference type="ChEBI" id="CHEBI:49883"/>
    </ligand>
</feature>
<feature type="binding site" evidence="1">
    <location>
        <position position="55"/>
    </location>
    <ligand>
        <name>[4Fe-4S] cluster</name>
        <dbReference type="ChEBI" id="CHEBI:49883"/>
    </ligand>
</feature>
<feature type="binding site" evidence="1">
    <location>
        <position position="83"/>
    </location>
    <ligand>
        <name>[4Fe-4S] cluster</name>
        <dbReference type="ChEBI" id="CHEBI:49883"/>
    </ligand>
</feature>
<feature type="binding site" evidence="1">
    <location>
        <position position="85"/>
    </location>
    <ligand>
        <name>Mo-bis(molybdopterin guanine dinucleotide)</name>
        <dbReference type="ChEBI" id="CHEBI:60539"/>
    </ligand>
</feature>
<feature type="binding site" evidence="1">
    <location>
        <position position="152"/>
    </location>
    <ligand>
        <name>Mo-bis(molybdopterin guanine dinucleotide)</name>
        <dbReference type="ChEBI" id="CHEBI:60539"/>
    </ligand>
</feature>
<feature type="binding site" evidence="1">
    <location>
        <position position="177"/>
    </location>
    <ligand>
        <name>Mo-bis(molybdopterin guanine dinucleotide)</name>
        <dbReference type="ChEBI" id="CHEBI:60539"/>
    </ligand>
</feature>
<feature type="binding site" evidence="1">
    <location>
        <position position="181"/>
    </location>
    <ligand>
        <name>Mo-bis(molybdopterin guanine dinucleotide)</name>
        <dbReference type="ChEBI" id="CHEBI:60539"/>
    </ligand>
</feature>
<feature type="binding site" evidence="1">
    <location>
        <begin position="214"/>
        <end position="221"/>
    </location>
    <ligand>
        <name>Mo-bis(molybdopterin guanine dinucleotide)</name>
        <dbReference type="ChEBI" id="CHEBI:60539"/>
    </ligand>
</feature>
<feature type="binding site" evidence="1">
    <location>
        <begin position="245"/>
        <end position="249"/>
    </location>
    <ligand>
        <name>Mo-bis(molybdopterin guanine dinucleotide)</name>
        <dbReference type="ChEBI" id="CHEBI:60539"/>
    </ligand>
</feature>
<feature type="binding site" evidence="1">
    <location>
        <begin position="264"/>
        <end position="266"/>
    </location>
    <ligand>
        <name>Mo-bis(molybdopterin guanine dinucleotide)</name>
        <dbReference type="ChEBI" id="CHEBI:60539"/>
    </ligand>
</feature>
<feature type="binding site" evidence="1">
    <location>
        <position position="375"/>
    </location>
    <ligand>
        <name>Mo-bis(molybdopterin guanine dinucleotide)</name>
        <dbReference type="ChEBI" id="CHEBI:60539"/>
    </ligand>
</feature>
<feature type="binding site" evidence="1">
    <location>
        <position position="379"/>
    </location>
    <ligand>
        <name>Mo-bis(molybdopterin guanine dinucleotide)</name>
        <dbReference type="ChEBI" id="CHEBI:60539"/>
    </ligand>
</feature>
<feature type="binding site" evidence="1">
    <location>
        <position position="485"/>
    </location>
    <ligand>
        <name>Mo-bis(molybdopterin guanine dinucleotide)</name>
        <dbReference type="ChEBI" id="CHEBI:60539"/>
    </ligand>
</feature>
<feature type="binding site" evidence="1">
    <location>
        <begin position="511"/>
        <end position="512"/>
    </location>
    <ligand>
        <name>Mo-bis(molybdopterin guanine dinucleotide)</name>
        <dbReference type="ChEBI" id="CHEBI:60539"/>
    </ligand>
</feature>
<feature type="binding site" evidence="1">
    <location>
        <position position="534"/>
    </location>
    <ligand>
        <name>Mo-bis(molybdopterin guanine dinucleotide)</name>
        <dbReference type="ChEBI" id="CHEBI:60539"/>
    </ligand>
</feature>
<feature type="binding site" evidence="1">
    <location>
        <position position="561"/>
    </location>
    <ligand>
        <name>Mo-bis(molybdopterin guanine dinucleotide)</name>
        <dbReference type="ChEBI" id="CHEBI:60539"/>
    </ligand>
</feature>
<feature type="binding site" evidence="1">
    <location>
        <begin position="721"/>
        <end position="730"/>
    </location>
    <ligand>
        <name>Mo-bis(molybdopterin guanine dinucleotide)</name>
        <dbReference type="ChEBI" id="CHEBI:60539"/>
    </ligand>
</feature>
<feature type="binding site" evidence="1">
    <location>
        <position position="797"/>
    </location>
    <ligand>
        <name>substrate</name>
    </ligand>
</feature>
<feature type="binding site" evidence="1">
    <location>
        <position position="805"/>
    </location>
    <ligand>
        <name>Mo-bis(molybdopterin guanine dinucleotide)</name>
        <dbReference type="ChEBI" id="CHEBI:60539"/>
    </ligand>
</feature>
<feature type="binding site" evidence="1">
    <location>
        <position position="822"/>
    </location>
    <ligand>
        <name>Mo-bis(molybdopterin guanine dinucleotide)</name>
        <dbReference type="ChEBI" id="CHEBI:60539"/>
    </ligand>
</feature>
<organism>
    <name type="scientific">Stutzerimonas stutzeri</name>
    <name type="common">Pseudomonas stutzeri</name>
    <dbReference type="NCBI Taxonomy" id="316"/>
    <lineage>
        <taxon>Bacteria</taxon>
        <taxon>Pseudomonadati</taxon>
        <taxon>Pseudomonadota</taxon>
        <taxon>Gammaproteobacteria</taxon>
        <taxon>Pseudomonadales</taxon>
        <taxon>Pseudomonadaceae</taxon>
        <taxon>Stutzerimonas</taxon>
    </lineage>
</organism>
<evidence type="ECO:0000255" key="1">
    <source>
        <dbReference type="HAMAP-Rule" id="MF_01630"/>
    </source>
</evidence>
<keyword id="KW-0004">4Fe-4S</keyword>
<keyword id="KW-0249">Electron transport</keyword>
<keyword id="KW-0408">Iron</keyword>
<keyword id="KW-0411">Iron-sulfur</keyword>
<keyword id="KW-0479">Metal-binding</keyword>
<keyword id="KW-0500">Molybdenum</keyword>
<keyword id="KW-0534">Nitrate assimilation</keyword>
<keyword id="KW-0560">Oxidoreductase</keyword>
<keyword id="KW-0574">Periplasm</keyword>
<keyword id="KW-0732">Signal</keyword>
<keyword id="KW-0813">Transport</keyword>